<gene>
    <name evidence="7" type="primary">rkr1</name>
    <name type="ORF">SPBC21D10.09c</name>
</gene>
<evidence type="ECO:0000250" key="1">
    <source>
        <dbReference type="UniProtKB" id="Q04781"/>
    </source>
</evidence>
<evidence type="ECO:0000255" key="2"/>
<evidence type="ECO:0000255" key="3">
    <source>
        <dbReference type="PROSITE-ProRule" id="PRU00175"/>
    </source>
</evidence>
<evidence type="ECO:0000256" key="4">
    <source>
        <dbReference type="SAM" id="MobiDB-lite"/>
    </source>
</evidence>
<evidence type="ECO:0000269" key="5">
    <source>
    </source>
</evidence>
<evidence type="ECO:0000305" key="6"/>
<evidence type="ECO:0000312" key="7">
    <source>
        <dbReference type="PomBase" id="SPBC21D10.09c"/>
    </source>
</evidence>
<comment type="function">
    <text evidence="1">E3 ubiquitin-protein ligase component of the ribosome quality control complex (RQC), a ribosome-associated complex that mediates ubiquitination and extraction of incompletely synthesized nascent chains for proteasomal degradation. Mediates ubiquitination of proteins derived from mRNAs lacking stop codons (non-stop proteins) and other translation arrest products induced by poly-lysine sequences and tandem rare codons. Ubiquitination leads to cdc48 recruitment for extraction and degradation of the incomplete translation product. May indirectly play a role in chromatin function and transcription.</text>
</comment>
<comment type="catalytic activity">
    <reaction evidence="1">
        <text>S-ubiquitinyl-[E2 ubiquitin-conjugating enzyme]-L-cysteine + [acceptor protein]-L-lysine = [E2 ubiquitin-conjugating enzyme]-L-cysteine + N(6)-ubiquitinyl-[acceptor protein]-L-lysine.</text>
        <dbReference type="EC" id="2.3.2.27"/>
    </reaction>
</comment>
<comment type="pathway">
    <text evidence="1">Protein modification; protein ubiquitination.</text>
</comment>
<comment type="subunit">
    <text evidence="1">Component of the ribosome quality control complex (RQC), composed of the E3 ubiquitin ligase rkr1/ltn1, rqc1 and mtr1/rqc2, as well as cdc48 and its ubiquitin-binding cofactors. RQC forms a stable complex with 60S ribosomal subunits.</text>
</comment>
<comment type="subcellular location">
    <subcellularLocation>
        <location evidence="1">Nucleus</location>
    </subcellularLocation>
    <subcellularLocation>
        <location evidence="5">Cytoplasm</location>
        <location evidence="5">Cytosol</location>
    </subcellularLocation>
</comment>
<comment type="similarity">
    <text evidence="6">Belongs to the LTN1 family.</text>
</comment>
<organism>
    <name type="scientific">Schizosaccharomyces pombe (strain 972 / ATCC 24843)</name>
    <name type="common">Fission yeast</name>
    <dbReference type="NCBI Taxonomy" id="284812"/>
    <lineage>
        <taxon>Eukaryota</taxon>
        <taxon>Fungi</taxon>
        <taxon>Dikarya</taxon>
        <taxon>Ascomycota</taxon>
        <taxon>Taphrinomycotina</taxon>
        <taxon>Schizosaccharomycetes</taxon>
        <taxon>Schizosaccharomycetales</taxon>
        <taxon>Schizosaccharomycetaceae</taxon>
        <taxon>Schizosaccharomyces</taxon>
    </lineage>
</organism>
<feature type="chain" id="PRO_0000310490" description="E3 ubiquitin-protein ligase listerin">
    <location>
        <begin position="1"/>
        <end position="1610"/>
    </location>
</feature>
<feature type="repeat" description="HEAT 1" evidence="2">
    <location>
        <begin position="110"/>
        <end position="148"/>
    </location>
</feature>
<feature type="repeat" description="HEAT 2" evidence="2">
    <location>
        <begin position="314"/>
        <end position="351"/>
    </location>
</feature>
<feature type="repeat" description="HEAT 3" evidence="2">
    <location>
        <begin position="372"/>
        <end position="408"/>
    </location>
</feature>
<feature type="repeat" description="HEAT 4" evidence="2">
    <location>
        <begin position="409"/>
        <end position="443"/>
    </location>
</feature>
<feature type="repeat" description="HEAT 5" evidence="2">
    <location>
        <begin position="590"/>
        <end position="626"/>
    </location>
</feature>
<feature type="repeat" description="HEAT 6" evidence="2">
    <location>
        <begin position="627"/>
        <end position="664"/>
    </location>
</feature>
<feature type="repeat" description="HEAT 7" evidence="2">
    <location>
        <begin position="736"/>
        <end position="773"/>
    </location>
</feature>
<feature type="repeat" description="HEAT 8" evidence="2">
    <location>
        <begin position="965"/>
        <end position="1003"/>
    </location>
</feature>
<feature type="repeat" description="HEAT 9" evidence="2">
    <location>
        <begin position="1119"/>
        <end position="1156"/>
    </location>
</feature>
<feature type="repeat" description="HEAT 10" evidence="2">
    <location>
        <begin position="1322"/>
        <end position="1354"/>
    </location>
</feature>
<feature type="repeat" description="HEAT 11" evidence="2">
    <location>
        <begin position="1355"/>
        <end position="1393"/>
    </location>
</feature>
<feature type="repeat" description="HEAT 12" evidence="2">
    <location>
        <begin position="1435"/>
        <end position="1473"/>
    </location>
</feature>
<feature type="zinc finger region" description="RING-type; atypical" evidence="3">
    <location>
        <begin position="1558"/>
        <end position="1604"/>
    </location>
</feature>
<feature type="region of interest" description="Disordered" evidence="4">
    <location>
        <begin position="1"/>
        <end position="20"/>
    </location>
</feature>
<feature type="compositionally biased region" description="Basic and acidic residues" evidence="4">
    <location>
        <begin position="1"/>
        <end position="10"/>
    </location>
</feature>
<dbReference type="EC" id="2.3.2.27" evidence="1"/>
<dbReference type="EMBL" id="CU329671">
    <property type="protein sequence ID" value="CAA20765.1"/>
    <property type="molecule type" value="Genomic_DNA"/>
</dbReference>
<dbReference type="PIR" id="T11681">
    <property type="entry name" value="T11681"/>
</dbReference>
<dbReference type="RefSeq" id="NP_596004.1">
    <property type="nucleotide sequence ID" value="NM_001021912.2"/>
</dbReference>
<dbReference type="SMR" id="O74349"/>
<dbReference type="BioGRID" id="277155">
    <property type="interactions" value="27"/>
</dbReference>
<dbReference type="FunCoup" id="O74349">
    <property type="interactions" value="491"/>
</dbReference>
<dbReference type="STRING" id="284812.O74349"/>
<dbReference type="iPTMnet" id="O74349"/>
<dbReference type="PaxDb" id="4896-SPBC21D10.09c.1"/>
<dbReference type="EnsemblFungi" id="SPBC21D10.09c.1">
    <property type="protein sequence ID" value="SPBC21D10.09c.1:pep"/>
    <property type="gene ID" value="SPBC21D10.09c"/>
</dbReference>
<dbReference type="GeneID" id="2540629"/>
<dbReference type="KEGG" id="spo:2540629"/>
<dbReference type="PomBase" id="SPBC21D10.09c">
    <property type="gene designation" value="rkr1"/>
</dbReference>
<dbReference type="VEuPathDB" id="FungiDB:SPBC21D10.09c"/>
<dbReference type="eggNOG" id="KOG0803">
    <property type="taxonomic scope" value="Eukaryota"/>
</dbReference>
<dbReference type="HOGENOM" id="CLU_000471_0_0_1"/>
<dbReference type="InParanoid" id="O74349"/>
<dbReference type="PhylomeDB" id="O74349"/>
<dbReference type="Reactome" id="R-SPO-983168">
    <property type="pathway name" value="Antigen processing: Ubiquitination &amp; Proteasome degradation"/>
</dbReference>
<dbReference type="UniPathway" id="UPA00143"/>
<dbReference type="PRO" id="PR:O74349"/>
<dbReference type="Proteomes" id="UP000002485">
    <property type="component" value="Chromosome II"/>
</dbReference>
<dbReference type="GO" id="GO:0005829">
    <property type="term" value="C:cytosol"/>
    <property type="evidence" value="ECO:0007005"/>
    <property type="project" value="PomBase"/>
</dbReference>
<dbReference type="GO" id="GO:0005634">
    <property type="term" value="C:nucleus"/>
    <property type="evidence" value="ECO:0007669"/>
    <property type="project" value="UniProtKB-SubCell"/>
</dbReference>
<dbReference type="GO" id="GO:1990112">
    <property type="term" value="C:RQC complex"/>
    <property type="evidence" value="ECO:0000318"/>
    <property type="project" value="GO_Central"/>
</dbReference>
<dbReference type="GO" id="GO:0043023">
    <property type="term" value="F:ribosomal large subunit binding"/>
    <property type="evidence" value="ECO:0000318"/>
    <property type="project" value="GO_Central"/>
</dbReference>
<dbReference type="GO" id="GO:0061630">
    <property type="term" value="F:ubiquitin protein ligase activity"/>
    <property type="evidence" value="ECO:0000318"/>
    <property type="project" value="GO_Central"/>
</dbReference>
<dbReference type="GO" id="GO:0008270">
    <property type="term" value="F:zinc ion binding"/>
    <property type="evidence" value="ECO:0000255"/>
    <property type="project" value="PomBase"/>
</dbReference>
<dbReference type="GO" id="GO:0016567">
    <property type="term" value="P:protein ubiquitination"/>
    <property type="evidence" value="ECO:0007669"/>
    <property type="project" value="UniProtKB-UniPathway"/>
</dbReference>
<dbReference type="GO" id="GO:0072344">
    <property type="term" value="P:rescue of stalled ribosome"/>
    <property type="evidence" value="ECO:0000318"/>
    <property type="project" value="GO_Central"/>
</dbReference>
<dbReference type="GO" id="GO:1990116">
    <property type="term" value="P:ribosome-associated ubiquitin-dependent protein catabolic process"/>
    <property type="evidence" value="ECO:0000316"/>
    <property type="project" value="PomBase"/>
</dbReference>
<dbReference type="CDD" id="cd16491">
    <property type="entry name" value="RING-CH-C4HC3_LTN1"/>
    <property type="match status" value="1"/>
</dbReference>
<dbReference type="FunFam" id="3.30.40.10:FF:000038">
    <property type="entry name" value="E3 ubiquitin-protein ligase listerin"/>
    <property type="match status" value="1"/>
</dbReference>
<dbReference type="Gene3D" id="3.30.40.10">
    <property type="entry name" value="Zinc/RING finger domain, C3HC4 (zinc finger)"/>
    <property type="match status" value="1"/>
</dbReference>
<dbReference type="InterPro" id="IPR016024">
    <property type="entry name" value="ARM-type_fold"/>
</dbReference>
<dbReference type="InterPro" id="IPR039795">
    <property type="entry name" value="LTN1/Rkr1"/>
</dbReference>
<dbReference type="InterPro" id="IPR054477">
    <property type="entry name" value="LTN1_E3_ligase_6th"/>
</dbReference>
<dbReference type="InterPro" id="IPR054476">
    <property type="entry name" value="Ltn1_N"/>
</dbReference>
<dbReference type="InterPro" id="IPR054478">
    <property type="entry name" value="LTN1_UBC"/>
</dbReference>
<dbReference type="InterPro" id="IPR039804">
    <property type="entry name" value="RING-CH-C4HC3_LTN1"/>
</dbReference>
<dbReference type="InterPro" id="IPR001841">
    <property type="entry name" value="Znf_RING"/>
</dbReference>
<dbReference type="InterPro" id="IPR013083">
    <property type="entry name" value="Znf_RING/FYVE/PHD"/>
</dbReference>
<dbReference type="PANTHER" id="PTHR12389:SF0">
    <property type="entry name" value="E3 UBIQUITIN-PROTEIN LIGASE LISTERIN"/>
    <property type="match status" value="1"/>
</dbReference>
<dbReference type="PANTHER" id="PTHR12389">
    <property type="entry name" value="ZINC FINGER PROTEIN 294"/>
    <property type="match status" value="1"/>
</dbReference>
<dbReference type="Pfam" id="PF22958">
    <property type="entry name" value="Ltn1_1st"/>
    <property type="match status" value="1"/>
</dbReference>
<dbReference type="Pfam" id="PF22999">
    <property type="entry name" value="LTN1_E3_ligase_6th"/>
    <property type="match status" value="1"/>
</dbReference>
<dbReference type="Pfam" id="PF23009">
    <property type="entry name" value="UBC_like"/>
    <property type="match status" value="1"/>
</dbReference>
<dbReference type="Pfam" id="PF13639">
    <property type="entry name" value="zf-RING_2"/>
    <property type="match status" value="1"/>
</dbReference>
<dbReference type="SMART" id="SM01197">
    <property type="entry name" value="FANCL_C"/>
    <property type="match status" value="1"/>
</dbReference>
<dbReference type="SMART" id="SM00184">
    <property type="entry name" value="RING"/>
    <property type="match status" value="1"/>
</dbReference>
<dbReference type="SUPFAM" id="SSF48371">
    <property type="entry name" value="ARM repeat"/>
    <property type="match status" value="1"/>
</dbReference>
<dbReference type="SUPFAM" id="SSF57850">
    <property type="entry name" value="RING/U-box"/>
    <property type="match status" value="1"/>
</dbReference>
<dbReference type="PROSITE" id="PS50089">
    <property type="entry name" value="ZF_RING_2"/>
    <property type="match status" value="1"/>
</dbReference>
<protein>
    <recommendedName>
        <fullName>E3 ubiquitin-protein ligase listerin</fullName>
        <ecNumber evidence="1">2.3.2.27</ecNumber>
    </recommendedName>
    <alternativeName>
        <fullName evidence="6">RING-type E3 ubiquitin transferase listerin</fullName>
    </alternativeName>
</protein>
<accession>O74349</accession>
<reference key="1">
    <citation type="journal article" date="2002" name="Nature">
        <title>The genome sequence of Schizosaccharomyces pombe.</title>
        <authorList>
            <person name="Wood V."/>
            <person name="Gwilliam R."/>
            <person name="Rajandream M.A."/>
            <person name="Lyne M.H."/>
            <person name="Lyne R."/>
            <person name="Stewart A."/>
            <person name="Sgouros J.G."/>
            <person name="Peat N."/>
            <person name="Hayles J."/>
            <person name="Baker S.G."/>
            <person name="Basham D."/>
            <person name="Bowman S."/>
            <person name="Brooks K."/>
            <person name="Brown D."/>
            <person name="Brown S."/>
            <person name="Chillingworth T."/>
            <person name="Churcher C.M."/>
            <person name="Collins M."/>
            <person name="Connor R."/>
            <person name="Cronin A."/>
            <person name="Davis P."/>
            <person name="Feltwell T."/>
            <person name="Fraser A."/>
            <person name="Gentles S."/>
            <person name="Goble A."/>
            <person name="Hamlin N."/>
            <person name="Harris D.E."/>
            <person name="Hidalgo J."/>
            <person name="Hodgson G."/>
            <person name="Holroyd S."/>
            <person name="Hornsby T."/>
            <person name="Howarth S."/>
            <person name="Huckle E.J."/>
            <person name="Hunt S."/>
            <person name="Jagels K."/>
            <person name="James K.D."/>
            <person name="Jones L."/>
            <person name="Jones M."/>
            <person name="Leather S."/>
            <person name="McDonald S."/>
            <person name="McLean J."/>
            <person name="Mooney P."/>
            <person name="Moule S."/>
            <person name="Mungall K.L."/>
            <person name="Murphy L.D."/>
            <person name="Niblett D."/>
            <person name="Odell C."/>
            <person name="Oliver K."/>
            <person name="O'Neil S."/>
            <person name="Pearson D."/>
            <person name="Quail M.A."/>
            <person name="Rabbinowitsch E."/>
            <person name="Rutherford K.M."/>
            <person name="Rutter S."/>
            <person name="Saunders D."/>
            <person name="Seeger K."/>
            <person name="Sharp S."/>
            <person name="Skelton J."/>
            <person name="Simmonds M.N."/>
            <person name="Squares R."/>
            <person name="Squares S."/>
            <person name="Stevens K."/>
            <person name="Taylor K."/>
            <person name="Taylor R.G."/>
            <person name="Tivey A."/>
            <person name="Walsh S.V."/>
            <person name="Warren T."/>
            <person name="Whitehead S."/>
            <person name="Woodward J.R."/>
            <person name="Volckaert G."/>
            <person name="Aert R."/>
            <person name="Robben J."/>
            <person name="Grymonprez B."/>
            <person name="Weltjens I."/>
            <person name="Vanstreels E."/>
            <person name="Rieger M."/>
            <person name="Schaefer M."/>
            <person name="Mueller-Auer S."/>
            <person name="Gabel C."/>
            <person name="Fuchs M."/>
            <person name="Duesterhoeft A."/>
            <person name="Fritzc C."/>
            <person name="Holzer E."/>
            <person name="Moestl D."/>
            <person name="Hilbert H."/>
            <person name="Borzym K."/>
            <person name="Langer I."/>
            <person name="Beck A."/>
            <person name="Lehrach H."/>
            <person name="Reinhardt R."/>
            <person name="Pohl T.M."/>
            <person name="Eger P."/>
            <person name="Zimmermann W."/>
            <person name="Wedler H."/>
            <person name="Wambutt R."/>
            <person name="Purnelle B."/>
            <person name="Goffeau A."/>
            <person name="Cadieu E."/>
            <person name="Dreano S."/>
            <person name="Gloux S."/>
            <person name="Lelaure V."/>
            <person name="Mottier S."/>
            <person name="Galibert F."/>
            <person name="Aves S.J."/>
            <person name="Xiang Z."/>
            <person name="Hunt C."/>
            <person name="Moore K."/>
            <person name="Hurst S.M."/>
            <person name="Lucas M."/>
            <person name="Rochet M."/>
            <person name="Gaillardin C."/>
            <person name="Tallada V.A."/>
            <person name="Garzon A."/>
            <person name="Thode G."/>
            <person name="Daga R.R."/>
            <person name="Cruzado L."/>
            <person name="Jimenez J."/>
            <person name="Sanchez M."/>
            <person name="del Rey F."/>
            <person name="Benito J."/>
            <person name="Dominguez A."/>
            <person name="Revuelta J.L."/>
            <person name="Moreno S."/>
            <person name="Armstrong J."/>
            <person name="Forsburg S.L."/>
            <person name="Cerutti L."/>
            <person name="Lowe T."/>
            <person name="McCombie W.R."/>
            <person name="Paulsen I."/>
            <person name="Potashkin J."/>
            <person name="Shpakovski G.V."/>
            <person name="Ussery D."/>
            <person name="Barrell B.G."/>
            <person name="Nurse P."/>
        </authorList>
    </citation>
    <scope>NUCLEOTIDE SEQUENCE [LARGE SCALE GENOMIC DNA]</scope>
    <source>
        <strain>972 / ATCC 24843</strain>
    </source>
</reference>
<reference key="2">
    <citation type="journal article" date="2006" name="Nat. Biotechnol.">
        <title>ORFeome cloning and global analysis of protein localization in the fission yeast Schizosaccharomyces pombe.</title>
        <authorList>
            <person name="Matsuyama A."/>
            <person name="Arai R."/>
            <person name="Yashiroda Y."/>
            <person name="Shirai A."/>
            <person name="Kamata A."/>
            <person name="Sekido S."/>
            <person name="Kobayashi Y."/>
            <person name="Hashimoto A."/>
            <person name="Hamamoto M."/>
            <person name="Hiraoka Y."/>
            <person name="Horinouchi S."/>
            <person name="Yoshida M."/>
        </authorList>
    </citation>
    <scope>SUBCELLULAR LOCATION [LARGE SCALE ANALYSIS]</scope>
</reference>
<keyword id="KW-0963">Cytoplasm</keyword>
<keyword id="KW-0479">Metal-binding</keyword>
<keyword id="KW-0539">Nucleus</keyword>
<keyword id="KW-1185">Reference proteome</keyword>
<keyword id="KW-0677">Repeat</keyword>
<keyword id="KW-0808">Transferase</keyword>
<keyword id="KW-0833">Ubl conjugation pathway</keyword>
<keyword id="KW-0862">Zinc</keyword>
<keyword id="KW-0863">Zinc-finger</keyword>
<name>LTN1_SCHPO</name>
<sequence>MKKKSTDLYGRKNPGMQSMSGSFSSLQIALDESSSNFSTIYEPPDLSGLDAEMIVIVKNLQKRDIVTKCRALQDLIQWNDPSQFDNEQFLNALAVLFPRLSIEVERHVRLKIFVFMSVLSSALQKKLAPWLKFYITPWVMGFFDSDRAVSVSAKDSFKNLLSEEKWPHVWLKFGSTIAPIVTDVFLHEDKESLTDLRFFSNEEAESKVTRVKSSCLLTLSFLFKQTADLENLETDKKIDKQTFKSSLYENLSTLFKSDEFWSLVSSPQDGVTVSLSDLLLIILKYDKPFVTQYKEKYFKRVSRMISRLTSLTCVPMLRLLSNMISNFPNEVHQFANDSKRPLSKLFSNLITKRISLPNSGFYTSLLNLFKSIGAMQLVPSIESVDELCDAFLETANQEQRFLSTEVYDCLLNFLSFVYTDSSDPQIKDHVRDRLRTIFTRYFKGEFVLRCSTSDFDHCLQSVFDKNSDFASLWNEVLFGFFNDESMDIETIPFDSLSRNLSLTVQTVLYLKNRNFQTGNEVMSILGPCLSFLMKLSTHKNERIACLSASQLITVCHIFSDTTLIKPVKELFQKYLVNDLPSSILKLGPQSPAFTLLRDILLLLKDYADLSEPWENVANQFTVSFDELENIRVLNSLPSLFADGKLRGKISLVKTLVEYYDTAVFAIMQNPGNDWDMIRACIGSKEILVPEETIKNILFTTLEYFLTNDWVDNHLIILCASLHSLKAHLPTIFDENKSLYSLLPVILFSKPEDDGHVAAHFESIFSLLKEKALEDSGFSLKLCSEVQEWSLNKVLNGSINEKLAADKCVLVFNSFGKLPSNFFTFPASFWDAKISSCIPFFSNKLFIDQDFILGFLDLVASEPINVDMTDVGTQFVHIFHASLYTLYYVETTGCDGDALFNLTFAYLLIRIYLQNGIQSIIDVPIRDAGIFVESFECYFKGEVVKFMRDKDALTVLNELLIDDIDGKMPVLFKRFKNLSSAENTTSFSIFAAQGLTDFLIVVSNLLEMDEKHVDVVLGKLGLSSSKSPIFVSSILEGLKPLEVDSEIIQRIRFKAVNDLTGKLHSANEVSKSLLILNAATTQQITEKPLLPITRCRLFLENITNWCSESGIKSLELLPVCCFLRFMYYFLPTVFSLSGSYWNSIFDYIKYAMKMSVVDAPIVKSFELFALRLYNALSKNYEMNSDIKDCIVESNESMNYLLLKRFLFTHESTLRNSVTARMCNQYLVKLLENCPGKVVRSFQYQEFFPSLCNSNDLQMESVCMKFLREKLSHELKELTVYYMVESDYEPDVSLCPELLSLAIDFPGDPFVMVSKMEKYEHALRVYLLVWDLIFYHFEETTYNIKLSIINQLHAMDLLRPLLNTLVEILNLSYDRPINVDKYPKIDYNLMDYSSATDRIRCLAIHIYYQCLRHLSSSVRSYWSEVKNRAFTSTVESFTGYNVSPLLISASLDDVERSIESEDFQSVGDVNVKVNRNTREISFIYNVDEHKLEMAIKIPSVYPLQNVQVEGIERVGVNERQWRSWILASQSILSSQNGSITDALLVLKKNISMHFEGVEECAICYSVLSVERTLPNKRCGTCRHKFHASCLYKWFKSSNSSRCPLCRSSFTFV</sequence>
<proteinExistence type="inferred from homology"/>